<proteinExistence type="inferred from homology"/>
<name>NDK_YERPY</name>
<feature type="chain" id="PRO_1000125036" description="Nucleoside diphosphate kinase">
    <location>
        <begin position="1"/>
        <end position="142"/>
    </location>
</feature>
<feature type="active site" description="Pros-phosphohistidine intermediate" evidence="1">
    <location>
        <position position="117"/>
    </location>
</feature>
<feature type="binding site" evidence="1">
    <location>
        <position position="11"/>
    </location>
    <ligand>
        <name>ATP</name>
        <dbReference type="ChEBI" id="CHEBI:30616"/>
    </ligand>
</feature>
<feature type="binding site" evidence="1">
    <location>
        <position position="59"/>
    </location>
    <ligand>
        <name>ATP</name>
        <dbReference type="ChEBI" id="CHEBI:30616"/>
    </ligand>
</feature>
<feature type="binding site" evidence="1">
    <location>
        <position position="87"/>
    </location>
    <ligand>
        <name>ATP</name>
        <dbReference type="ChEBI" id="CHEBI:30616"/>
    </ligand>
</feature>
<feature type="binding site" evidence="1">
    <location>
        <position position="93"/>
    </location>
    <ligand>
        <name>ATP</name>
        <dbReference type="ChEBI" id="CHEBI:30616"/>
    </ligand>
</feature>
<feature type="binding site" evidence="1">
    <location>
        <position position="104"/>
    </location>
    <ligand>
        <name>ATP</name>
        <dbReference type="ChEBI" id="CHEBI:30616"/>
    </ligand>
</feature>
<feature type="binding site" evidence="1">
    <location>
        <position position="114"/>
    </location>
    <ligand>
        <name>ATP</name>
        <dbReference type="ChEBI" id="CHEBI:30616"/>
    </ligand>
</feature>
<accession>B1JS01</accession>
<evidence type="ECO:0000255" key="1">
    <source>
        <dbReference type="HAMAP-Rule" id="MF_00451"/>
    </source>
</evidence>
<keyword id="KW-0067">ATP-binding</keyword>
<keyword id="KW-0963">Cytoplasm</keyword>
<keyword id="KW-0418">Kinase</keyword>
<keyword id="KW-0460">Magnesium</keyword>
<keyword id="KW-0479">Metal-binding</keyword>
<keyword id="KW-0546">Nucleotide metabolism</keyword>
<keyword id="KW-0547">Nucleotide-binding</keyword>
<keyword id="KW-0597">Phosphoprotein</keyword>
<keyword id="KW-0808">Transferase</keyword>
<reference key="1">
    <citation type="submission" date="2008-02" db="EMBL/GenBank/DDBJ databases">
        <title>Complete sequence of Yersinia pseudotuberculosis YPIII.</title>
        <authorList>
            <consortium name="US DOE Joint Genome Institute"/>
            <person name="Copeland A."/>
            <person name="Lucas S."/>
            <person name="Lapidus A."/>
            <person name="Glavina del Rio T."/>
            <person name="Dalin E."/>
            <person name="Tice H."/>
            <person name="Bruce D."/>
            <person name="Goodwin L."/>
            <person name="Pitluck S."/>
            <person name="Munk A.C."/>
            <person name="Brettin T."/>
            <person name="Detter J.C."/>
            <person name="Han C."/>
            <person name="Tapia R."/>
            <person name="Schmutz J."/>
            <person name="Larimer F."/>
            <person name="Land M."/>
            <person name="Hauser L."/>
            <person name="Challacombe J.F."/>
            <person name="Green L."/>
            <person name="Lindler L.E."/>
            <person name="Nikolich M.P."/>
            <person name="Richardson P."/>
        </authorList>
    </citation>
    <scope>NUCLEOTIDE SEQUENCE [LARGE SCALE GENOMIC DNA]</scope>
    <source>
        <strain>YPIII</strain>
    </source>
</reference>
<gene>
    <name evidence="1" type="primary">ndk</name>
    <name type="ordered locus">YPK_1289</name>
</gene>
<protein>
    <recommendedName>
        <fullName evidence="1">Nucleoside diphosphate kinase</fullName>
        <shortName evidence="1">NDK</shortName>
        <shortName evidence="1">NDP kinase</shortName>
        <ecNumber evidence="1">2.7.4.6</ecNumber>
    </recommendedName>
    <alternativeName>
        <fullName evidence="1">Nucleoside-2-P kinase</fullName>
    </alternativeName>
</protein>
<comment type="function">
    <text evidence="1">Major role in the synthesis of nucleoside triphosphates other than ATP. The ATP gamma phosphate is transferred to the NDP beta phosphate via a ping-pong mechanism, using a phosphorylated active-site intermediate.</text>
</comment>
<comment type="catalytic activity">
    <reaction evidence="1">
        <text>a 2'-deoxyribonucleoside 5'-diphosphate + ATP = a 2'-deoxyribonucleoside 5'-triphosphate + ADP</text>
        <dbReference type="Rhea" id="RHEA:44640"/>
        <dbReference type="ChEBI" id="CHEBI:30616"/>
        <dbReference type="ChEBI" id="CHEBI:61560"/>
        <dbReference type="ChEBI" id="CHEBI:73316"/>
        <dbReference type="ChEBI" id="CHEBI:456216"/>
        <dbReference type="EC" id="2.7.4.6"/>
    </reaction>
</comment>
<comment type="catalytic activity">
    <reaction evidence="1">
        <text>a ribonucleoside 5'-diphosphate + ATP = a ribonucleoside 5'-triphosphate + ADP</text>
        <dbReference type="Rhea" id="RHEA:18113"/>
        <dbReference type="ChEBI" id="CHEBI:30616"/>
        <dbReference type="ChEBI" id="CHEBI:57930"/>
        <dbReference type="ChEBI" id="CHEBI:61557"/>
        <dbReference type="ChEBI" id="CHEBI:456216"/>
        <dbReference type="EC" id="2.7.4.6"/>
    </reaction>
</comment>
<comment type="cofactor">
    <cofactor evidence="1">
        <name>Mg(2+)</name>
        <dbReference type="ChEBI" id="CHEBI:18420"/>
    </cofactor>
</comment>
<comment type="subunit">
    <text evidence="1">Homotetramer.</text>
</comment>
<comment type="subcellular location">
    <subcellularLocation>
        <location evidence="1">Cytoplasm</location>
    </subcellularLocation>
</comment>
<comment type="similarity">
    <text evidence="1">Belongs to the NDK family.</text>
</comment>
<dbReference type="EC" id="2.7.4.6" evidence="1"/>
<dbReference type="EMBL" id="CP000950">
    <property type="protein sequence ID" value="ACA67587.1"/>
    <property type="molecule type" value="Genomic_DNA"/>
</dbReference>
<dbReference type="RefSeq" id="WP_011192804.1">
    <property type="nucleotide sequence ID" value="NZ_CP009792.1"/>
</dbReference>
<dbReference type="SMR" id="B1JS01"/>
<dbReference type="KEGG" id="ypy:YPK_1289"/>
<dbReference type="PATRIC" id="fig|502800.11.peg.1924"/>
<dbReference type="GO" id="GO:0005737">
    <property type="term" value="C:cytoplasm"/>
    <property type="evidence" value="ECO:0007669"/>
    <property type="project" value="UniProtKB-SubCell"/>
</dbReference>
<dbReference type="GO" id="GO:0005524">
    <property type="term" value="F:ATP binding"/>
    <property type="evidence" value="ECO:0007669"/>
    <property type="project" value="UniProtKB-UniRule"/>
</dbReference>
<dbReference type="GO" id="GO:0046872">
    <property type="term" value="F:metal ion binding"/>
    <property type="evidence" value="ECO:0007669"/>
    <property type="project" value="UniProtKB-KW"/>
</dbReference>
<dbReference type="GO" id="GO:0004550">
    <property type="term" value="F:nucleoside diphosphate kinase activity"/>
    <property type="evidence" value="ECO:0007669"/>
    <property type="project" value="UniProtKB-UniRule"/>
</dbReference>
<dbReference type="GO" id="GO:0006241">
    <property type="term" value="P:CTP biosynthetic process"/>
    <property type="evidence" value="ECO:0007669"/>
    <property type="project" value="UniProtKB-UniRule"/>
</dbReference>
<dbReference type="GO" id="GO:0006183">
    <property type="term" value="P:GTP biosynthetic process"/>
    <property type="evidence" value="ECO:0007669"/>
    <property type="project" value="UniProtKB-UniRule"/>
</dbReference>
<dbReference type="GO" id="GO:0006228">
    <property type="term" value="P:UTP biosynthetic process"/>
    <property type="evidence" value="ECO:0007669"/>
    <property type="project" value="UniProtKB-UniRule"/>
</dbReference>
<dbReference type="CDD" id="cd04413">
    <property type="entry name" value="NDPk_I"/>
    <property type="match status" value="1"/>
</dbReference>
<dbReference type="FunFam" id="3.30.70.141:FF:000001">
    <property type="entry name" value="Nucleoside diphosphate kinase"/>
    <property type="match status" value="1"/>
</dbReference>
<dbReference type="Gene3D" id="3.30.70.141">
    <property type="entry name" value="Nucleoside diphosphate kinase-like domain"/>
    <property type="match status" value="1"/>
</dbReference>
<dbReference type="HAMAP" id="MF_00451">
    <property type="entry name" value="NDP_kinase"/>
    <property type="match status" value="1"/>
</dbReference>
<dbReference type="InterPro" id="IPR034907">
    <property type="entry name" value="NDK-like_dom"/>
</dbReference>
<dbReference type="InterPro" id="IPR036850">
    <property type="entry name" value="NDK-like_dom_sf"/>
</dbReference>
<dbReference type="InterPro" id="IPR001564">
    <property type="entry name" value="Nucleoside_diP_kinase"/>
</dbReference>
<dbReference type="InterPro" id="IPR023005">
    <property type="entry name" value="Nucleoside_diP_kinase_AS"/>
</dbReference>
<dbReference type="NCBIfam" id="NF001908">
    <property type="entry name" value="PRK00668.1"/>
    <property type="match status" value="1"/>
</dbReference>
<dbReference type="PANTHER" id="PTHR46161">
    <property type="entry name" value="NUCLEOSIDE DIPHOSPHATE KINASE"/>
    <property type="match status" value="1"/>
</dbReference>
<dbReference type="PANTHER" id="PTHR46161:SF3">
    <property type="entry name" value="NUCLEOSIDE DIPHOSPHATE KINASE DDB_G0292928-RELATED"/>
    <property type="match status" value="1"/>
</dbReference>
<dbReference type="Pfam" id="PF00334">
    <property type="entry name" value="NDK"/>
    <property type="match status" value="1"/>
</dbReference>
<dbReference type="PRINTS" id="PR01243">
    <property type="entry name" value="NUCDPKINASE"/>
</dbReference>
<dbReference type="SMART" id="SM00562">
    <property type="entry name" value="NDK"/>
    <property type="match status" value="1"/>
</dbReference>
<dbReference type="SUPFAM" id="SSF54919">
    <property type="entry name" value="Nucleoside diphosphate kinase, NDK"/>
    <property type="match status" value="1"/>
</dbReference>
<dbReference type="PROSITE" id="PS00469">
    <property type="entry name" value="NDPK"/>
    <property type="match status" value="1"/>
</dbReference>
<dbReference type="PROSITE" id="PS51374">
    <property type="entry name" value="NDPK_LIKE"/>
    <property type="match status" value="1"/>
</dbReference>
<organism>
    <name type="scientific">Yersinia pseudotuberculosis serotype O:3 (strain YPIII)</name>
    <dbReference type="NCBI Taxonomy" id="502800"/>
    <lineage>
        <taxon>Bacteria</taxon>
        <taxon>Pseudomonadati</taxon>
        <taxon>Pseudomonadota</taxon>
        <taxon>Gammaproteobacteria</taxon>
        <taxon>Enterobacterales</taxon>
        <taxon>Yersiniaceae</taxon>
        <taxon>Yersinia</taxon>
    </lineage>
</organism>
<sequence length="142" mass="15527">MALERTFSIIKPNAVANNNIGAIYARFESAGFKIIAAKMLHLTKEQAEGFYAEHKGRPFFDGLVEFMTSGPIIVQVLEGENAVQRHRDIMGATNPDNALAGTLRADFADSFTANAVHGSDAVESAQREIAYFFAADEIFPRS</sequence>